<feature type="chain" id="PRO_1000087541" description="Malate dehydrogenase">
    <location>
        <begin position="1"/>
        <end position="311"/>
    </location>
</feature>
<feature type="active site" description="Proton acceptor" evidence="1">
    <location>
        <position position="177"/>
    </location>
</feature>
<feature type="binding site" evidence="1">
    <location>
        <begin position="7"/>
        <end position="13"/>
    </location>
    <ligand>
        <name>NAD(+)</name>
        <dbReference type="ChEBI" id="CHEBI:57540"/>
    </ligand>
</feature>
<feature type="binding site" evidence="1">
    <location>
        <position position="34"/>
    </location>
    <ligand>
        <name>NAD(+)</name>
        <dbReference type="ChEBI" id="CHEBI:57540"/>
    </ligand>
</feature>
<feature type="binding site" evidence="1">
    <location>
        <position position="81"/>
    </location>
    <ligand>
        <name>substrate</name>
    </ligand>
</feature>
<feature type="binding site" evidence="1">
    <location>
        <position position="87"/>
    </location>
    <ligand>
        <name>substrate</name>
    </ligand>
</feature>
<feature type="binding site" evidence="1">
    <location>
        <position position="94"/>
    </location>
    <ligand>
        <name>NAD(+)</name>
        <dbReference type="ChEBI" id="CHEBI:57540"/>
    </ligand>
</feature>
<feature type="binding site" evidence="1">
    <location>
        <begin position="117"/>
        <end position="119"/>
    </location>
    <ligand>
        <name>NAD(+)</name>
        <dbReference type="ChEBI" id="CHEBI:57540"/>
    </ligand>
</feature>
<feature type="binding site" evidence="1">
    <location>
        <position position="119"/>
    </location>
    <ligand>
        <name>substrate</name>
    </ligand>
</feature>
<feature type="binding site" evidence="1">
    <location>
        <position position="153"/>
    </location>
    <ligand>
        <name>substrate</name>
    </ligand>
</feature>
<feature type="binding site" evidence="1">
    <location>
        <position position="227"/>
    </location>
    <ligand>
        <name>NAD(+)</name>
        <dbReference type="ChEBI" id="CHEBI:57540"/>
    </ligand>
</feature>
<accession>A8FRU0</accession>
<reference key="1">
    <citation type="submission" date="2007-08" db="EMBL/GenBank/DDBJ databases">
        <title>Complete sequence of Shewanella sediminis HAW-EB3.</title>
        <authorList>
            <consortium name="US DOE Joint Genome Institute"/>
            <person name="Copeland A."/>
            <person name="Lucas S."/>
            <person name="Lapidus A."/>
            <person name="Barry K."/>
            <person name="Glavina del Rio T."/>
            <person name="Dalin E."/>
            <person name="Tice H."/>
            <person name="Pitluck S."/>
            <person name="Chertkov O."/>
            <person name="Brettin T."/>
            <person name="Bruce D."/>
            <person name="Detter J.C."/>
            <person name="Han C."/>
            <person name="Schmutz J."/>
            <person name="Larimer F."/>
            <person name="Land M."/>
            <person name="Hauser L."/>
            <person name="Kyrpides N."/>
            <person name="Kim E."/>
            <person name="Zhao J.-S."/>
            <person name="Richardson P."/>
        </authorList>
    </citation>
    <scope>NUCLEOTIDE SEQUENCE [LARGE SCALE GENOMIC DNA]</scope>
    <source>
        <strain>HAW-EB3</strain>
    </source>
</reference>
<dbReference type="EC" id="1.1.1.37" evidence="1"/>
<dbReference type="EMBL" id="CP000821">
    <property type="protein sequence ID" value="ABV35563.1"/>
    <property type="molecule type" value="Genomic_DNA"/>
</dbReference>
<dbReference type="RefSeq" id="WP_012141299.1">
    <property type="nucleotide sequence ID" value="NC_009831.1"/>
</dbReference>
<dbReference type="SMR" id="A8FRU0"/>
<dbReference type="STRING" id="425104.Ssed_0952"/>
<dbReference type="KEGG" id="sse:Ssed_0952"/>
<dbReference type="eggNOG" id="COG0039">
    <property type="taxonomic scope" value="Bacteria"/>
</dbReference>
<dbReference type="HOGENOM" id="CLU_047181_1_0_6"/>
<dbReference type="OrthoDB" id="9802969at2"/>
<dbReference type="Proteomes" id="UP000002015">
    <property type="component" value="Chromosome"/>
</dbReference>
<dbReference type="GO" id="GO:0005737">
    <property type="term" value="C:cytoplasm"/>
    <property type="evidence" value="ECO:0007669"/>
    <property type="project" value="TreeGrafter"/>
</dbReference>
<dbReference type="GO" id="GO:0030060">
    <property type="term" value="F:L-malate dehydrogenase (NAD+) activity"/>
    <property type="evidence" value="ECO:0007669"/>
    <property type="project" value="UniProtKB-UniRule"/>
</dbReference>
<dbReference type="GO" id="GO:0006108">
    <property type="term" value="P:malate metabolic process"/>
    <property type="evidence" value="ECO:0007669"/>
    <property type="project" value="InterPro"/>
</dbReference>
<dbReference type="GO" id="GO:0006099">
    <property type="term" value="P:tricarboxylic acid cycle"/>
    <property type="evidence" value="ECO:0007669"/>
    <property type="project" value="UniProtKB-UniRule"/>
</dbReference>
<dbReference type="CDD" id="cd01337">
    <property type="entry name" value="MDH_glyoxysomal_mitochondrial"/>
    <property type="match status" value="1"/>
</dbReference>
<dbReference type="FunFam" id="3.40.50.720:FF:000017">
    <property type="entry name" value="Malate dehydrogenase"/>
    <property type="match status" value="1"/>
</dbReference>
<dbReference type="FunFam" id="3.90.110.10:FF:000001">
    <property type="entry name" value="Malate dehydrogenase"/>
    <property type="match status" value="1"/>
</dbReference>
<dbReference type="Gene3D" id="3.90.110.10">
    <property type="entry name" value="Lactate dehydrogenase/glycoside hydrolase, family 4, C-terminal"/>
    <property type="match status" value="1"/>
</dbReference>
<dbReference type="Gene3D" id="3.40.50.720">
    <property type="entry name" value="NAD(P)-binding Rossmann-like Domain"/>
    <property type="match status" value="1"/>
</dbReference>
<dbReference type="HAMAP" id="MF_01516">
    <property type="entry name" value="Malate_dehydrog_1"/>
    <property type="match status" value="1"/>
</dbReference>
<dbReference type="InterPro" id="IPR001557">
    <property type="entry name" value="L-lactate/malate_DH"/>
</dbReference>
<dbReference type="InterPro" id="IPR022383">
    <property type="entry name" value="Lactate/malate_DH_C"/>
</dbReference>
<dbReference type="InterPro" id="IPR001236">
    <property type="entry name" value="Lactate/malate_DH_N"/>
</dbReference>
<dbReference type="InterPro" id="IPR015955">
    <property type="entry name" value="Lactate_DH/Glyco_Ohase_4_C"/>
</dbReference>
<dbReference type="InterPro" id="IPR001252">
    <property type="entry name" value="Malate_DH_AS"/>
</dbReference>
<dbReference type="InterPro" id="IPR010097">
    <property type="entry name" value="Malate_DH_type1"/>
</dbReference>
<dbReference type="InterPro" id="IPR023958">
    <property type="entry name" value="Malate_DH_type1_bac"/>
</dbReference>
<dbReference type="InterPro" id="IPR036291">
    <property type="entry name" value="NAD(P)-bd_dom_sf"/>
</dbReference>
<dbReference type="NCBIfam" id="TIGR01772">
    <property type="entry name" value="MDH_euk_gproteo"/>
    <property type="match status" value="1"/>
</dbReference>
<dbReference type="PANTHER" id="PTHR11540">
    <property type="entry name" value="MALATE AND LACTATE DEHYDROGENASE"/>
    <property type="match status" value="1"/>
</dbReference>
<dbReference type="PANTHER" id="PTHR11540:SF16">
    <property type="entry name" value="MALATE DEHYDROGENASE, MITOCHONDRIAL"/>
    <property type="match status" value="1"/>
</dbReference>
<dbReference type="Pfam" id="PF02866">
    <property type="entry name" value="Ldh_1_C"/>
    <property type="match status" value="1"/>
</dbReference>
<dbReference type="Pfam" id="PF00056">
    <property type="entry name" value="Ldh_1_N"/>
    <property type="match status" value="1"/>
</dbReference>
<dbReference type="PIRSF" id="PIRSF000102">
    <property type="entry name" value="Lac_mal_DH"/>
    <property type="match status" value="1"/>
</dbReference>
<dbReference type="SUPFAM" id="SSF56327">
    <property type="entry name" value="LDH C-terminal domain-like"/>
    <property type="match status" value="1"/>
</dbReference>
<dbReference type="SUPFAM" id="SSF51735">
    <property type="entry name" value="NAD(P)-binding Rossmann-fold domains"/>
    <property type="match status" value="1"/>
</dbReference>
<dbReference type="PROSITE" id="PS00068">
    <property type="entry name" value="MDH"/>
    <property type="match status" value="1"/>
</dbReference>
<evidence type="ECO:0000255" key="1">
    <source>
        <dbReference type="HAMAP-Rule" id="MF_01516"/>
    </source>
</evidence>
<proteinExistence type="inferred from homology"/>
<name>MDH_SHESH</name>
<protein>
    <recommendedName>
        <fullName evidence="1">Malate dehydrogenase</fullName>
        <ecNumber evidence="1">1.1.1.37</ecNumber>
    </recommendedName>
</protein>
<organism>
    <name type="scientific">Shewanella sediminis (strain HAW-EB3)</name>
    <dbReference type="NCBI Taxonomy" id="425104"/>
    <lineage>
        <taxon>Bacteria</taxon>
        <taxon>Pseudomonadati</taxon>
        <taxon>Pseudomonadota</taxon>
        <taxon>Gammaproteobacteria</taxon>
        <taxon>Alteromonadales</taxon>
        <taxon>Shewanellaceae</taxon>
        <taxon>Shewanella</taxon>
    </lineage>
</organism>
<sequence length="311" mass="32011">MKVAVLGAAGGIGQALALLLKTQLPAGSKLSLYDIAPVTPGVAVDLSHIPTAVEVKGFAGEDPTPALEGADVVLISAGVARKPGMDRSDLFNINAGIVRNLVEKCAAACPKALIGIITNPVNTTVAIAAEVLKAAGVYDKNRLFGVTTLDVIRSETFIAEAKGLNVDDVKINVIGGHSGVTILPLLSQVQGVSFSDEEVAALTTRIQNAGTEVVEAKAGGGSATLSMGQAACRFGLSLVRGLQGEENVIECAYVDGGSEHADFFAQPILLGKNGVESVLAYGEVSEFEANARDAMLDTLKADIKLGVEFVK</sequence>
<gene>
    <name evidence="1" type="primary">mdh</name>
    <name type="ordered locus">Ssed_0952</name>
</gene>
<keyword id="KW-0520">NAD</keyword>
<keyword id="KW-0560">Oxidoreductase</keyword>
<keyword id="KW-1185">Reference proteome</keyword>
<keyword id="KW-0816">Tricarboxylic acid cycle</keyword>
<comment type="function">
    <text evidence="1">Catalyzes the reversible oxidation of malate to oxaloacetate.</text>
</comment>
<comment type="catalytic activity">
    <reaction evidence="1">
        <text>(S)-malate + NAD(+) = oxaloacetate + NADH + H(+)</text>
        <dbReference type="Rhea" id="RHEA:21432"/>
        <dbReference type="ChEBI" id="CHEBI:15378"/>
        <dbReference type="ChEBI" id="CHEBI:15589"/>
        <dbReference type="ChEBI" id="CHEBI:16452"/>
        <dbReference type="ChEBI" id="CHEBI:57540"/>
        <dbReference type="ChEBI" id="CHEBI:57945"/>
        <dbReference type="EC" id="1.1.1.37"/>
    </reaction>
</comment>
<comment type="subunit">
    <text evidence="1">Homodimer.</text>
</comment>
<comment type="similarity">
    <text evidence="1">Belongs to the LDH/MDH superfamily. MDH type 1 family.</text>
</comment>